<proteinExistence type="inferred from homology"/>
<keyword id="KW-0067">ATP-binding</keyword>
<keyword id="KW-0131">Cell cycle</keyword>
<keyword id="KW-0132">Cell division</keyword>
<keyword id="KW-0133">Cell shape</keyword>
<keyword id="KW-0961">Cell wall biogenesis/degradation</keyword>
<keyword id="KW-0963">Cytoplasm</keyword>
<keyword id="KW-0436">Ligase</keyword>
<keyword id="KW-0547">Nucleotide-binding</keyword>
<keyword id="KW-0573">Peptidoglycan synthesis</keyword>
<keyword id="KW-1185">Reference proteome</keyword>
<organism>
    <name type="scientific">Dinoroseobacter shibae (strain DSM 16493 / NCIMB 14021 / DFL 12)</name>
    <dbReference type="NCBI Taxonomy" id="398580"/>
    <lineage>
        <taxon>Bacteria</taxon>
        <taxon>Pseudomonadati</taxon>
        <taxon>Pseudomonadota</taxon>
        <taxon>Alphaproteobacteria</taxon>
        <taxon>Rhodobacterales</taxon>
        <taxon>Roseobacteraceae</taxon>
        <taxon>Dinoroseobacter</taxon>
    </lineage>
</organism>
<name>MURC_DINSH</name>
<comment type="function">
    <text evidence="1">Cell wall formation.</text>
</comment>
<comment type="catalytic activity">
    <reaction evidence="1">
        <text>UDP-N-acetyl-alpha-D-muramate + L-alanine + ATP = UDP-N-acetyl-alpha-D-muramoyl-L-alanine + ADP + phosphate + H(+)</text>
        <dbReference type="Rhea" id="RHEA:23372"/>
        <dbReference type="ChEBI" id="CHEBI:15378"/>
        <dbReference type="ChEBI" id="CHEBI:30616"/>
        <dbReference type="ChEBI" id="CHEBI:43474"/>
        <dbReference type="ChEBI" id="CHEBI:57972"/>
        <dbReference type="ChEBI" id="CHEBI:70757"/>
        <dbReference type="ChEBI" id="CHEBI:83898"/>
        <dbReference type="ChEBI" id="CHEBI:456216"/>
        <dbReference type="EC" id="6.3.2.8"/>
    </reaction>
</comment>
<comment type="pathway">
    <text evidence="1">Cell wall biogenesis; peptidoglycan biosynthesis.</text>
</comment>
<comment type="subcellular location">
    <subcellularLocation>
        <location evidence="1">Cytoplasm</location>
    </subcellularLocation>
</comment>
<comment type="similarity">
    <text evidence="1">Belongs to the MurCDEF family.</text>
</comment>
<comment type="sequence caution" evidence="2">
    <conflict type="erroneous initiation">
        <sequence resource="EMBL-CDS" id="ABV94156"/>
    </conflict>
</comment>
<accession>A8LS63</accession>
<dbReference type="EC" id="6.3.2.8" evidence="1"/>
<dbReference type="EMBL" id="CP000830">
    <property type="protein sequence ID" value="ABV94156.1"/>
    <property type="status" value="ALT_INIT"/>
    <property type="molecule type" value="Genomic_DNA"/>
</dbReference>
<dbReference type="RefSeq" id="WP_012179087.1">
    <property type="nucleotide sequence ID" value="NC_009952.1"/>
</dbReference>
<dbReference type="SMR" id="A8LS63"/>
<dbReference type="STRING" id="398580.Dshi_2422"/>
<dbReference type="KEGG" id="dsh:Dshi_2422"/>
<dbReference type="eggNOG" id="COG0773">
    <property type="taxonomic scope" value="Bacteria"/>
</dbReference>
<dbReference type="HOGENOM" id="CLU_028104_2_2_5"/>
<dbReference type="OrthoDB" id="9804126at2"/>
<dbReference type="UniPathway" id="UPA00219"/>
<dbReference type="Proteomes" id="UP000006833">
    <property type="component" value="Chromosome"/>
</dbReference>
<dbReference type="GO" id="GO:0005737">
    <property type="term" value="C:cytoplasm"/>
    <property type="evidence" value="ECO:0007669"/>
    <property type="project" value="UniProtKB-SubCell"/>
</dbReference>
<dbReference type="GO" id="GO:0005524">
    <property type="term" value="F:ATP binding"/>
    <property type="evidence" value="ECO:0007669"/>
    <property type="project" value="UniProtKB-UniRule"/>
</dbReference>
<dbReference type="GO" id="GO:0008763">
    <property type="term" value="F:UDP-N-acetylmuramate-L-alanine ligase activity"/>
    <property type="evidence" value="ECO:0007669"/>
    <property type="project" value="UniProtKB-UniRule"/>
</dbReference>
<dbReference type="GO" id="GO:0051301">
    <property type="term" value="P:cell division"/>
    <property type="evidence" value="ECO:0007669"/>
    <property type="project" value="UniProtKB-KW"/>
</dbReference>
<dbReference type="GO" id="GO:0071555">
    <property type="term" value="P:cell wall organization"/>
    <property type="evidence" value="ECO:0007669"/>
    <property type="project" value="UniProtKB-KW"/>
</dbReference>
<dbReference type="GO" id="GO:0009252">
    <property type="term" value="P:peptidoglycan biosynthetic process"/>
    <property type="evidence" value="ECO:0007669"/>
    <property type="project" value="UniProtKB-UniRule"/>
</dbReference>
<dbReference type="GO" id="GO:0008360">
    <property type="term" value="P:regulation of cell shape"/>
    <property type="evidence" value="ECO:0007669"/>
    <property type="project" value="UniProtKB-KW"/>
</dbReference>
<dbReference type="Gene3D" id="3.90.190.20">
    <property type="entry name" value="Mur ligase, C-terminal domain"/>
    <property type="match status" value="1"/>
</dbReference>
<dbReference type="Gene3D" id="3.40.1190.10">
    <property type="entry name" value="Mur-like, catalytic domain"/>
    <property type="match status" value="1"/>
</dbReference>
<dbReference type="Gene3D" id="3.40.50.720">
    <property type="entry name" value="NAD(P)-binding Rossmann-like Domain"/>
    <property type="match status" value="1"/>
</dbReference>
<dbReference type="HAMAP" id="MF_00046">
    <property type="entry name" value="MurC"/>
    <property type="match status" value="1"/>
</dbReference>
<dbReference type="InterPro" id="IPR036565">
    <property type="entry name" value="Mur-like_cat_sf"/>
</dbReference>
<dbReference type="InterPro" id="IPR004101">
    <property type="entry name" value="Mur_ligase_C"/>
</dbReference>
<dbReference type="InterPro" id="IPR036615">
    <property type="entry name" value="Mur_ligase_C_dom_sf"/>
</dbReference>
<dbReference type="InterPro" id="IPR013221">
    <property type="entry name" value="Mur_ligase_cen"/>
</dbReference>
<dbReference type="InterPro" id="IPR000713">
    <property type="entry name" value="Mur_ligase_N"/>
</dbReference>
<dbReference type="InterPro" id="IPR050061">
    <property type="entry name" value="MurCDEF_pg_biosynth"/>
</dbReference>
<dbReference type="InterPro" id="IPR005758">
    <property type="entry name" value="UDP-N-AcMur_Ala_ligase_MurC"/>
</dbReference>
<dbReference type="NCBIfam" id="TIGR01082">
    <property type="entry name" value="murC"/>
    <property type="match status" value="1"/>
</dbReference>
<dbReference type="PANTHER" id="PTHR43445:SF3">
    <property type="entry name" value="UDP-N-ACETYLMURAMATE--L-ALANINE LIGASE"/>
    <property type="match status" value="1"/>
</dbReference>
<dbReference type="PANTHER" id="PTHR43445">
    <property type="entry name" value="UDP-N-ACETYLMURAMATE--L-ALANINE LIGASE-RELATED"/>
    <property type="match status" value="1"/>
</dbReference>
<dbReference type="Pfam" id="PF01225">
    <property type="entry name" value="Mur_ligase"/>
    <property type="match status" value="1"/>
</dbReference>
<dbReference type="Pfam" id="PF02875">
    <property type="entry name" value="Mur_ligase_C"/>
    <property type="match status" value="1"/>
</dbReference>
<dbReference type="Pfam" id="PF08245">
    <property type="entry name" value="Mur_ligase_M"/>
    <property type="match status" value="1"/>
</dbReference>
<dbReference type="SUPFAM" id="SSF51984">
    <property type="entry name" value="MurCD N-terminal domain"/>
    <property type="match status" value="1"/>
</dbReference>
<dbReference type="SUPFAM" id="SSF53623">
    <property type="entry name" value="MurD-like peptide ligases, catalytic domain"/>
    <property type="match status" value="1"/>
</dbReference>
<dbReference type="SUPFAM" id="SSF53244">
    <property type="entry name" value="MurD-like peptide ligases, peptide-binding domain"/>
    <property type="match status" value="1"/>
</dbReference>
<evidence type="ECO:0000255" key="1">
    <source>
        <dbReference type="HAMAP-Rule" id="MF_00046"/>
    </source>
</evidence>
<evidence type="ECO:0000305" key="2"/>
<sequence length="464" mass="49461">MNAATKLPTQLGPIHFTGIGGIGMSGIAEVLLTHGYTVQGSDLKPSKITERLERLGAKIFIGQVGENLADAEVVVISSAIKPGNPELETARARGLPVVRRAEMLAELMRLKSNIAIAGTHGKTTTTTMVATLLDRGGIDPTVINGGIIHAYDSNARAGAGEWMVVEADESDGTFNRLPATIAVVTNIDPEHMEHWGSFERLKDGFHEFVSNIPFYGLAVCCTDHPEVQALVGRITDRRVVTFGFNTQADVRAVNLTYKSGVAHFDILLRNEGQVISGCTLPMPGDHNVSNALAAVAVARHLGMKRDEIRAALAGFAGVNRRFTKVAELGGVTIIDDYGHHPVEIAAVLKAARQASEGRVIAVHQPHRFSRLASLFEDFCTCFNEADVVGISDIFAAGEDPIPGASRDDLVKGLIAHGHRHAVAVPDEDALEALIRAEAKPGDIVVCLGAGTISTWAHNLPARMG</sequence>
<gene>
    <name evidence="1" type="primary">murC</name>
    <name type="ordered locus">Dshi_2422</name>
</gene>
<feature type="chain" id="PRO_0000336832" description="UDP-N-acetylmuramate--L-alanine ligase">
    <location>
        <begin position="1"/>
        <end position="464"/>
    </location>
</feature>
<feature type="binding site" evidence="1">
    <location>
        <begin position="118"/>
        <end position="124"/>
    </location>
    <ligand>
        <name>ATP</name>
        <dbReference type="ChEBI" id="CHEBI:30616"/>
    </ligand>
</feature>
<protein>
    <recommendedName>
        <fullName evidence="1">UDP-N-acetylmuramate--L-alanine ligase</fullName>
        <ecNumber evidence="1">6.3.2.8</ecNumber>
    </recommendedName>
    <alternativeName>
        <fullName evidence="1">UDP-N-acetylmuramoyl-L-alanine synthetase</fullName>
    </alternativeName>
</protein>
<reference key="1">
    <citation type="journal article" date="2010" name="ISME J.">
        <title>The complete genome sequence of the algal symbiont Dinoroseobacter shibae: a hitchhiker's guide to life in the sea.</title>
        <authorList>
            <person name="Wagner-Dobler I."/>
            <person name="Ballhausen B."/>
            <person name="Berger M."/>
            <person name="Brinkhoff T."/>
            <person name="Buchholz I."/>
            <person name="Bunk B."/>
            <person name="Cypionka H."/>
            <person name="Daniel R."/>
            <person name="Drepper T."/>
            <person name="Gerdts G."/>
            <person name="Hahnke S."/>
            <person name="Han C."/>
            <person name="Jahn D."/>
            <person name="Kalhoefer D."/>
            <person name="Kiss H."/>
            <person name="Klenk H.P."/>
            <person name="Kyrpides N."/>
            <person name="Liebl W."/>
            <person name="Liesegang H."/>
            <person name="Meincke L."/>
            <person name="Pati A."/>
            <person name="Petersen J."/>
            <person name="Piekarski T."/>
            <person name="Pommerenke C."/>
            <person name="Pradella S."/>
            <person name="Pukall R."/>
            <person name="Rabus R."/>
            <person name="Stackebrandt E."/>
            <person name="Thole S."/>
            <person name="Thompson L."/>
            <person name="Tielen P."/>
            <person name="Tomasch J."/>
            <person name="von Jan M."/>
            <person name="Wanphrut N."/>
            <person name="Wichels A."/>
            <person name="Zech H."/>
            <person name="Simon M."/>
        </authorList>
    </citation>
    <scope>NUCLEOTIDE SEQUENCE [LARGE SCALE GENOMIC DNA]</scope>
    <source>
        <strain>DSM 16493 / NCIMB 14021 / DFL 12</strain>
    </source>
</reference>